<evidence type="ECO:0000250" key="1"/>
<evidence type="ECO:0000305" key="2"/>
<comment type="function">
    <text evidence="1">Global regulator with both positive and negative effects that controls the expression of several virulence factors and the biofilm formation process in a cell density-dependent manner.</text>
</comment>
<comment type="subunit">
    <text evidence="1">Homodimer.</text>
</comment>
<comment type="subcellular location">
    <subcellularLocation>
        <location evidence="1">Cytoplasm</location>
    </subcellularLocation>
</comment>
<comment type="similarity">
    <text evidence="2">Belongs to the SarA family.</text>
</comment>
<dbReference type="EMBL" id="AJ938182">
    <property type="protein sequence ID" value="CAI80257.1"/>
    <property type="molecule type" value="Genomic_DNA"/>
</dbReference>
<dbReference type="RefSeq" id="WP_001018677.1">
    <property type="nucleotide sequence ID" value="NC_007622.1"/>
</dbReference>
<dbReference type="SMR" id="Q2YSV9"/>
<dbReference type="KEGG" id="sab:SAB0569c"/>
<dbReference type="HOGENOM" id="CLU_164084_0_0_9"/>
<dbReference type="PRO" id="PR:Q2YSV9"/>
<dbReference type="GO" id="GO:0005737">
    <property type="term" value="C:cytoplasm"/>
    <property type="evidence" value="ECO:0007669"/>
    <property type="project" value="UniProtKB-SubCell"/>
</dbReference>
<dbReference type="GO" id="GO:0003677">
    <property type="term" value="F:DNA binding"/>
    <property type="evidence" value="ECO:0007669"/>
    <property type="project" value="UniProtKB-KW"/>
</dbReference>
<dbReference type="GO" id="GO:0003700">
    <property type="term" value="F:DNA-binding transcription factor activity"/>
    <property type="evidence" value="ECO:0007669"/>
    <property type="project" value="InterPro"/>
</dbReference>
<dbReference type="GO" id="GO:0046872">
    <property type="term" value="F:metal ion binding"/>
    <property type="evidence" value="ECO:0007669"/>
    <property type="project" value="UniProtKB-KW"/>
</dbReference>
<dbReference type="GO" id="GO:0006950">
    <property type="term" value="P:response to stress"/>
    <property type="evidence" value="ECO:0007669"/>
    <property type="project" value="TreeGrafter"/>
</dbReference>
<dbReference type="FunFam" id="1.10.10.10:FF:000541">
    <property type="entry name" value="Transcriptional regulator SarA"/>
    <property type="match status" value="1"/>
</dbReference>
<dbReference type="Gene3D" id="1.10.10.10">
    <property type="entry name" value="Winged helix-like DNA-binding domain superfamily/Winged helix DNA-binding domain"/>
    <property type="match status" value="1"/>
</dbReference>
<dbReference type="InterPro" id="IPR039422">
    <property type="entry name" value="MarR/SlyA-like"/>
</dbReference>
<dbReference type="InterPro" id="IPR010166">
    <property type="entry name" value="SarA/Rot_dom"/>
</dbReference>
<dbReference type="InterPro" id="IPR055166">
    <property type="entry name" value="Transc_reg_Sar_Rot_HTH"/>
</dbReference>
<dbReference type="InterPro" id="IPR036388">
    <property type="entry name" value="WH-like_DNA-bd_sf"/>
</dbReference>
<dbReference type="InterPro" id="IPR036390">
    <property type="entry name" value="WH_DNA-bd_sf"/>
</dbReference>
<dbReference type="NCBIfam" id="TIGR01889">
    <property type="entry name" value="Staph_reg_Sar"/>
    <property type="match status" value="1"/>
</dbReference>
<dbReference type="NCBIfam" id="NF038268">
    <property type="entry name" value="TF_SarA"/>
    <property type="match status" value="1"/>
</dbReference>
<dbReference type="PANTHER" id="PTHR33164:SF5">
    <property type="entry name" value="ORGANIC HYDROPEROXIDE RESISTANCE TRANSCRIPTIONAL REGULATOR"/>
    <property type="match status" value="1"/>
</dbReference>
<dbReference type="PANTHER" id="PTHR33164">
    <property type="entry name" value="TRANSCRIPTIONAL REGULATOR, MARR FAMILY"/>
    <property type="match status" value="1"/>
</dbReference>
<dbReference type="Pfam" id="PF22381">
    <property type="entry name" value="Staph_reg_Sar_Rot"/>
    <property type="match status" value="1"/>
</dbReference>
<dbReference type="SUPFAM" id="SSF46785">
    <property type="entry name" value="Winged helix' DNA-binding domain"/>
    <property type="match status" value="1"/>
</dbReference>
<accession>Q2YSV9</accession>
<proteinExistence type="inferred from homology"/>
<keyword id="KW-0010">Activator</keyword>
<keyword id="KW-0963">Cytoplasm</keyword>
<keyword id="KW-0238">DNA-binding</keyword>
<keyword id="KW-0479">Metal-binding</keyword>
<keyword id="KW-0678">Repressor</keyword>
<keyword id="KW-0804">Transcription</keyword>
<keyword id="KW-0805">Transcription regulation</keyword>
<keyword id="KW-0843">Virulence</keyword>
<organism>
    <name type="scientific">Staphylococcus aureus (strain bovine RF122 / ET3-1)</name>
    <dbReference type="NCBI Taxonomy" id="273036"/>
    <lineage>
        <taxon>Bacteria</taxon>
        <taxon>Bacillati</taxon>
        <taxon>Bacillota</taxon>
        <taxon>Bacilli</taxon>
        <taxon>Bacillales</taxon>
        <taxon>Staphylococcaceae</taxon>
        <taxon>Staphylococcus</taxon>
    </lineage>
</organism>
<gene>
    <name type="primary">sarA</name>
    <name type="ordered locus">SAB0569c</name>
</gene>
<sequence length="124" mass="14718">MAITKINDCFELLSMVTYADKLKSLIKKEFSISFEEFAVLTYISENKEKEYYLKDIINHLNYKQPQVVKAVKILSQEDYFDKKRNEHDERTVLILVNAQQRKKIESLLSRVNKRITEANNEIEL</sequence>
<protein>
    <recommendedName>
        <fullName>Transcriptional regulator SarA</fullName>
    </recommendedName>
    <alternativeName>
        <fullName>Staphylococcal accessory regulator A</fullName>
    </alternativeName>
</protein>
<reference key="1">
    <citation type="journal article" date="2007" name="PLoS ONE">
        <title>Molecular correlates of host specialization in Staphylococcus aureus.</title>
        <authorList>
            <person name="Herron-Olson L."/>
            <person name="Fitzgerald J.R."/>
            <person name="Musser J.M."/>
            <person name="Kapur V."/>
        </authorList>
    </citation>
    <scope>NUCLEOTIDE SEQUENCE [LARGE SCALE GENOMIC DNA]</scope>
    <source>
        <strain>bovine RF122 / ET3-1</strain>
    </source>
</reference>
<name>SARA_STAAB</name>
<feature type="initiator methionine" description="Removed" evidence="1">
    <location>
        <position position="1"/>
    </location>
</feature>
<feature type="chain" id="PRO_0000295625" description="Transcriptional regulator SarA">
    <location>
        <begin position="2"/>
        <end position="124"/>
    </location>
</feature>
<feature type="binding site" evidence="1">
    <location>
        <position position="7"/>
    </location>
    <ligand>
        <name>a divalent metal cation</name>
        <dbReference type="ChEBI" id="CHEBI:60240"/>
    </ligand>
</feature>
<feature type="binding site" evidence="1">
    <location>
        <position position="8"/>
    </location>
    <ligand>
        <name>a divalent metal cation</name>
        <dbReference type="ChEBI" id="CHEBI:60240"/>
    </ligand>
</feature>
<feature type="binding site" evidence="1">
    <location>
        <position position="11"/>
    </location>
    <ligand>
        <name>a divalent metal cation</name>
        <dbReference type="ChEBI" id="CHEBI:60240"/>
    </ligand>
</feature>